<keyword id="KW-0025">Alternative splicing</keyword>
<keyword id="KW-0963">Cytoplasm</keyword>
<keyword id="KW-1185">Reference proteome</keyword>
<keyword id="KW-0677">Repeat</keyword>
<keyword id="KW-0808">Transferase</keyword>
<keyword id="KW-0833">Ubl conjugation pathway</keyword>
<sequence length="1247" mass="144050">MGDEFPFHHLGYVCLNEIYKHLTLKEIFQLSFSSNQIKRSLGIASIPVKSIFVNFDSQYPKIKLIGESSQLEWVFGIPDGLEYTDVGVYKIGHFKFQCKTSGTAFYTEHYDLENAMLVVIRYMISIFKCSNSIITYLSIDLGVIEDSRAICENFVAFKKVERLSIFQTNYGVERNTLNFAQSFDWICDNLEIKNIHIGADVLEPKMVQKTNGEFDIKLCARRFEQVLTMDHIYLQHADWITSEDLLNLDVQTAMLIENNLTEQDLNAFIKQWLRSDSDKLWWLEVKGKMMFNREEVLKDLDVQDDAYRSLNTRWYVARRSRANPSGNGCARKKMGSLRPKLTELWPFKVYIIFGSILIVFGPAALNRMITLRRMDVETDRPSGSETGIFVSKSAVYPFGNKNEVVKVWWNIDKPENCLDWIGLFDNNDSSFYLDQKSLRQHISPVVFTLTSKNLLNASEVYFGLIDGMTGRLLAKSENVEICKSASLVVHEVKKPENINVYLNTNHGRIEIPKKRSFSRKNGSFRSSFEFDFDVEDLHISLVENSEKLNFDHFIASNQLQNNYIQSKSFSHSHVVEIVFSIEPKTSKKSAPDIMEIASSSQTPPESHWKTYLDAKKRKFYVNHVTKETRWTKPDTLNNNHIEPETPVHKRLSDRSASPRNSFITPRRTITVRSAGCPKSDLIQFFQRDEFKTALYENQDAMQIYNECSVVRHAIHRIQKDLDPPSKFENQPLFVRFVNLFADITQPLPSGWECITMNNRTVFLNHANKETSFYDPRIRRFETKTSRRGRSVPSRSSTAHKGKIDHALISKCEDLRKIAQDNFPQIAERISKKLMLIERFGGLAVASLANDLDITLALSMLDSNTEKLAGEGDNIKMFYEDMKKEKLGKGPSRLCWKVSRDRLLDDAFRIILNVDPFVLKKSRLHIRFEGELALDYGGLSREFFILLSRELFHPKNGYFEYEGNDYHLQLRPRGCETEKEKKWLILCGRVLALAVIHRCYIDVFFTNVFYKSLQKRPVTLMDFKESDAEFYKSMNWLLENDVVDLEMSFVYSSMVNGKLAEQELVPGGESQMVTEANKAEFIDLMCQKKAIRGVEKPLEILLTSFNQILNDNLLNSLESSDLKRILSGSLELDLNDWRTNTIYKGGYSDCHIVVEWFWEVIETMTNQERFDLLLFVTGSSSVPFEGFSALRGNEEISKFCIEKWGDATSFPRAHTCFNRLQLPSYNTKQQLKSKLQQAIVNGMSYSIE</sequence>
<evidence type="ECO:0000250" key="1">
    <source>
        <dbReference type="UniProtKB" id="Q76N89"/>
    </source>
</evidence>
<evidence type="ECO:0000255" key="2">
    <source>
        <dbReference type="PROSITE-ProRule" id="PRU00104"/>
    </source>
</evidence>
<evidence type="ECO:0000255" key="3">
    <source>
        <dbReference type="PROSITE-ProRule" id="PRU00224"/>
    </source>
</evidence>
<evidence type="ECO:0000256" key="4">
    <source>
        <dbReference type="SAM" id="MobiDB-lite"/>
    </source>
</evidence>
<evidence type="ECO:0000269" key="5">
    <source>
    </source>
</evidence>
<evidence type="ECO:0000303" key="6">
    <source>
    </source>
</evidence>
<evidence type="ECO:0000305" key="7"/>
<evidence type="ECO:0000312" key="8">
    <source>
        <dbReference type="WormBase" id="F45H7.6a"/>
    </source>
</evidence>
<evidence type="ECO:0000312" key="9">
    <source>
        <dbReference type="WormBase" id="F45H7.6b"/>
    </source>
</evidence>
<feature type="chain" id="PRO_0000065258" description="E3 ubiquitin-protein ligase hecw-1">
    <location>
        <begin position="1"/>
        <end position="1247"/>
    </location>
</feature>
<feature type="domain" description="WW 1" evidence="3">
    <location>
        <begin position="602"/>
        <end position="635"/>
    </location>
</feature>
<feature type="domain" description="WW 2" evidence="3">
    <location>
        <begin position="745"/>
        <end position="777"/>
    </location>
</feature>
<feature type="domain" description="HECT" evidence="2">
    <location>
        <begin position="914"/>
        <end position="1247"/>
    </location>
</feature>
<feature type="region of interest" description="Disordered" evidence="4">
    <location>
        <begin position="633"/>
        <end position="659"/>
    </location>
</feature>
<feature type="compositionally biased region" description="Basic and acidic residues" evidence="4">
    <location>
        <begin position="641"/>
        <end position="653"/>
    </location>
</feature>
<feature type="active site" description="Glycyl thioester intermediate" evidence="2">
    <location>
        <position position="1215"/>
    </location>
</feature>
<feature type="splice variant" id="VSP_059536" description="In isoform a." evidence="7">
    <location>
        <begin position="1"/>
        <end position="373"/>
    </location>
</feature>
<reference key="1">
    <citation type="journal article" date="1998" name="Science">
        <title>Genome sequence of the nematode C. elegans: a platform for investigating biology.</title>
        <authorList>
            <consortium name="The C. elegans sequencing consortium"/>
        </authorList>
    </citation>
    <scope>NUCLEOTIDE SEQUENCE [LARGE SCALE GENOMIC DNA]</scope>
    <source>
        <strain>Bristol N2</strain>
    </source>
</reference>
<reference key="2">
    <citation type="journal article" date="2011" name="Nature">
        <title>Natural polymorphisms in C. elegans HECW-1 E3 ligase affect pathogen avoidance behaviour.</title>
        <authorList>
            <person name="Chang H.C."/>
            <person name="Paek J."/>
            <person name="Kim D.H."/>
        </authorList>
    </citation>
    <scope>FUNCTION</scope>
    <scope>TISSUE SPECIFICITY</scope>
</reference>
<name>HECW1_CAEEL</name>
<organism>
    <name type="scientific">Caenorhabditis elegans</name>
    <dbReference type="NCBI Taxonomy" id="6239"/>
    <lineage>
        <taxon>Eukaryota</taxon>
        <taxon>Metazoa</taxon>
        <taxon>Ecdysozoa</taxon>
        <taxon>Nematoda</taxon>
        <taxon>Chromadorea</taxon>
        <taxon>Rhabditida</taxon>
        <taxon>Rhabditina</taxon>
        <taxon>Rhabditomorpha</taxon>
        <taxon>Rhabditoidea</taxon>
        <taxon>Rhabditidae</taxon>
        <taxon>Peloderinae</taxon>
        <taxon>Caenorhabditis</taxon>
    </lineage>
</organism>
<protein>
    <recommendedName>
        <fullName evidence="7">E3 ubiquitin-protein ligase hecw-1</fullName>
        <ecNumber evidence="1">2.3.2.26</ecNumber>
    </recommendedName>
</protein>
<proteinExistence type="evidence at transcript level"/>
<accession>Q09291</accession>
<accession>A0A1C3NSJ1</accession>
<accession>G5EEJ0</accession>
<comment type="function">
    <text evidence="1 5">E3 ubiquitin-protein ligase (By similarity). Functions in the OLL neurons in the anterior ganglion to inhibit avoidance to microbial pathogens such as P.aeruginosa although worms do display avoidance behavior, vacating a P.aeruginosa lawn within 24 hours (PubMed:22089131). Likely to act by inhibiting the neuropeptide receptor npr-1 (PubMed:22089131).</text>
</comment>
<comment type="catalytic activity">
    <reaction evidence="1">
        <text>S-ubiquitinyl-[E2 ubiquitin-conjugating enzyme]-L-cysteine + [acceptor protein]-L-lysine = [E2 ubiquitin-conjugating enzyme]-L-cysteine + N(6)-ubiquitinyl-[acceptor protein]-L-lysine.</text>
        <dbReference type="EC" id="2.3.2.26"/>
    </reaction>
</comment>
<comment type="pathway">
    <text evidence="1">Protein modification; protein ubiquitination.</text>
</comment>
<comment type="subcellular location">
    <subcellularLocation>
        <location evidence="1">Cytoplasm</location>
    </subcellularLocation>
</comment>
<comment type="alternative products">
    <event type="alternative splicing"/>
    <isoform>
        <id>Q09291-1</id>
        <name evidence="9">b</name>
        <sequence type="displayed"/>
    </isoform>
    <isoform>
        <id>Q09291-2</id>
        <name evidence="8">a</name>
        <sequence type="described" ref="VSP_059536"/>
    </isoform>
</comment>
<comment type="tissue specificity">
    <text evidence="5">Expressed in the nervous system throughout the body. In the anterior ganglion, expression is limited to the two lateral outer labial neurons OLLL and OLLR.</text>
</comment>
<gene>
    <name evidence="6 9" type="primary">hecw-1</name>
    <name evidence="9" type="ORF">F45H7.6</name>
</gene>
<dbReference type="EC" id="2.3.2.26" evidence="1"/>
<dbReference type="EMBL" id="BX284603">
    <property type="protein sequence ID" value="CAA84325.2"/>
    <property type="molecule type" value="Genomic_DNA"/>
</dbReference>
<dbReference type="EMBL" id="BX284603">
    <property type="protein sequence ID" value="CAA86770.1"/>
    <property type="molecule type" value="Genomic_DNA"/>
</dbReference>
<dbReference type="EMBL" id="BX284603">
    <property type="protein sequence ID" value="SBV53365.1"/>
    <property type="molecule type" value="Genomic_DNA"/>
</dbReference>
<dbReference type="PIR" id="T20271">
    <property type="entry name" value="T20271"/>
</dbReference>
<dbReference type="RefSeq" id="NP_001317872.1">
    <molecule id="Q09291-1"/>
    <property type="nucleotide sequence ID" value="NM_001330981.3"/>
</dbReference>
<dbReference type="RefSeq" id="NP_497697.2">
    <molecule id="Q09291-2"/>
    <property type="nucleotide sequence ID" value="NM_065296.5"/>
</dbReference>
<dbReference type="RefSeq" id="NP_497698.1">
    <property type="nucleotide sequence ID" value="NM_065297.1"/>
</dbReference>
<dbReference type="SMR" id="Q09291"/>
<dbReference type="BioGRID" id="48680">
    <property type="interactions" value="1"/>
</dbReference>
<dbReference type="FunCoup" id="Q09291">
    <property type="interactions" value="43"/>
</dbReference>
<dbReference type="STRING" id="6239.F45H7.6b.1"/>
<dbReference type="PaxDb" id="6239-F45H7.6"/>
<dbReference type="PeptideAtlas" id="Q09291"/>
<dbReference type="EnsemblMetazoa" id="F45H7.6a.1">
    <molecule id="Q09291-2"/>
    <property type="protein sequence ID" value="F45H7.6a.1"/>
    <property type="gene ID" value="WBGene00009738"/>
</dbReference>
<dbReference type="EnsemblMetazoa" id="F45H7.6b.1">
    <molecule id="Q09291-1"/>
    <property type="protein sequence ID" value="F45H7.6b.1"/>
    <property type="gene ID" value="WBGene00009738"/>
</dbReference>
<dbReference type="GeneID" id="175438"/>
<dbReference type="KEGG" id="cel:CELE_F45H7.6"/>
<dbReference type="UCSC" id="C56G7.2">
    <molecule id="Q09291-1"/>
    <property type="organism name" value="c. elegans"/>
</dbReference>
<dbReference type="AGR" id="WB:WBGene00009738"/>
<dbReference type="CTD" id="175438"/>
<dbReference type="WormBase" id="F45H7.6a">
    <molecule id="Q09291-2"/>
    <property type="protein sequence ID" value="CE44269"/>
    <property type="gene ID" value="WBGene00009738"/>
    <property type="gene designation" value="hecw-1"/>
</dbReference>
<dbReference type="WormBase" id="F45H7.6b">
    <molecule id="Q09291-1"/>
    <property type="protein sequence ID" value="CE51746"/>
    <property type="gene ID" value="WBGene00009738"/>
    <property type="gene designation" value="hecw-1"/>
</dbReference>
<dbReference type="eggNOG" id="ENOG502TGI5">
    <property type="taxonomic scope" value="Eukaryota"/>
</dbReference>
<dbReference type="eggNOG" id="KOG0940">
    <property type="taxonomic scope" value="Eukaryota"/>
</dbReference>
<dbReference type="GeneTree" id="ENSGT00940000173012"/>
<dbReference type="HOGENOM" id="CLU_324458_0_0_1"/>
<dbReference type="InParanoid" id="Q09291"/>
<dbReference type="OMA" id="NGMSYSI"/>
<dbReference type="OrthoDB" id="5987976at2759"/>
<dbReference type="PhylomeDB" id="Q09291"/>
<dbReference type="Reactome" id="R-CEL-4641258">
    <property type="pathway name" value="Degradation of DVL"/>
</dbReference>
<dbReference type="Reactome" id="R-CEL-983168">
    <property type="pathway name" value="Antigen processing: Ubiquitination &amp; Proteasome degradation"/>
</dbReference>
<dbReference type="UniPathway" id="UPA00143"/>
<dbReference type="PRO" id="PR:Q09291"/>
<dbReference type="Proteomes" id="UP000001940">
    <property type="component" value="Chromosome III"/>
</dbReference>
<dbReference type="Bgee" id="WBGene00009738">
    <property type="expression patterns" value="Expressed in larva and 3 other cell types or tissues"/>
</dbReference>
<dbReference type="GO" id="GO:0005737">
    <property type="term" value="C:cytoplasm"/>
    <property type="evidence" value="ECO:0000318"/>
    <property type="project" value="GO_Central"/>
</dbReference>
<dbReference type="GO" id="GO:0061630">
    <property type="term" value="F:ubiquitin protein ligase activity"/>
    <property type="evidence" value="ECO:0000318"/>
    <property type="project" value="GO_Central"/>
</dbReference>
<dbReference type="GO" id="GO:0016567">
    <property type="term" value="P:protein ubiquitination"/>
    <property type="evidence" value="ECO:0007669"/>
    <property type="project" value="UniProtKB-UniPathway"/>
</dbReference>
<dbReference type="GO" id="GO:1900424">
    <property type="term" value="P:regulation of defense response to bacterium"/>
    <property type="evidence" value="ECO:0000315"/>
    <property type="project" value="WormBase"/>
</dbReference>
<dbReference type="GO" id="GO:0048814">
    <property type="term" value="P:regulation of dendrite morphogenesis"/>
    <property type="evidence" value="ECO:0000318"/>
    <property type="project" value="GO_Central"/>
</dbReference>
<dbReference type="GO" id="GO:0006511">
    <property type="term" value="P:ubiquitin-dependent protein catabolic process"/>
    <property type="evidence" value="ECO:0000318"/>
    <property type="project" value="GO_Central"/>
</dbReference>
<dbReference type="CDD" id="cd00078">
    <property type="entry name" value="HECTc"/>
    <property type="match status" value="1"/>
</dbReference>
<dbReference type="CDD" id="cd00201">
    <property type="entry name" value="WW"/>
    <property type="match status" value="2"/>
</dbReference>
<dbReference type="FunFam" id="3.30.2410.10:FF:000024">
    <property type="entry name" value="E3 ubiquitin-protein ligase hecw-1"/>
    <property type="match status" value="1"/>
</dbReference>
<dbReference type="Gene3D" id="2.20.70.10">
    <property type="match status" value="2"/>
</dbReference>
<dbReference type="Gene3D" id="2.60.40.2840">
    <property type="match status" value="1"/>
</dbReference>
<dbReference type="Gene3D" id="3.30.2160.10">
    <property type="entry name" value="Hect, E3 ligase catalytic domain"/>
    <property type="match status" value="1"/>
</dbReference>
<dbReference type="Gene3D" id="3.30.2410.10">
    <property type="entry name" value="Hect, E3 ligase catalytic domain"/>
    <property type="match status" value="1"/>
</dbReference>
<dbReference type="Gene3D" id="3.90.1750.10">
    <property type="entry name" value="Hect, E3 ligase catalytic domains"/>
    <property type="match status" value="1"/>
</dbReference>
<dbReference type="InterPro" id="IPR050409">
    <property type="entry name" value="E3_ubiq-protein_ligase"/>
</dbReference>
<dbReference type="InterPro" id="IPR012885">
    <property type="entry name" value="F-box-assoc_dom_typ2"/>
</dbReference>
<dbReference type="InterPro" id="IPR000569">
    <property type="entry name" value="HECT_dom"/>
</dbReference>
<dbReference type="InterPro" id="IPR035983">
    <property type="entry name" value="Hect_E3_ubiquitin_ligase"/>
</dbReference>
<dbReference type="InterPro" id="IPR001202">
    <property type="entry name" value="WW_dom"/>
</dbReference>
<dbReference type="InterPro" id="IPR036020">
    <property type="entry name" value="WW_dom_sf"/>
</dbReference>
<dbReference type="PANTHER" id="PTHR11254">
    <property type="entry name" value="HECT DOMAIN UBIQUITIN-PROTEIN LIGASE"/>
    <property type="match status" value="1"/>
</dbReference>
<dbReference type="PANTHER" id="PTHR11254:SF320">
    <property type="entry name" value="HECT-TYPE E3 UBIQUITIN TRANSFERASE"/>
    <property type="match status" value="1"/>
</dbReference>
<dbReference type="Pfam" id="PF07735">
    <property type="entry name" value="FBA_2"/>
    <property type="match status" value="1"/>
</dbReference>
<dbReference type="Pfam" id="PF00632">
    <property type="entry name" value="HECT"/>
    <property type="match status" value="1"/>
</dbReference>
<dbReference type="Pfam" id="PF00397">
    <property type="entry name" value="WW"/>
    <property type="match status" value="1"/>
</dbReference>
<dbReference type="SMART" id="SM00119">
    <property type="entry name" value="HECTc"/>
    <property type="match status" value="1"/>
</dbReference>
<dbReference type="SMART" id="SM00456">
    <property type="entry name" value="WW"/>
    <property type="match status" value="2"/>
</dbReference>
<dbReference type="SUPFAM" id="SSF56204">
    <property type="entry name" value="Hect, E3 ligase catalytic domain"/>
    <property type="match status" value="1"/>
</dbReference>
<dbReference type="SUPFAM" id="SSF51045">
    <property type="entry name" value="WW domain"/>
    <property type="match status" value="2"/>
</dbReference>
<dbReference type="PROSITE" id="PS50237">
    <property type="entry name" value="HECT"/>
    <property type="match status" value="1"/>
</dbReference>
<dbReference type="PROSITE" id="PS01159">
    <property type="entry name" value="WW_DOMAIN_1"/>
    <property type="match status" value="2"/>
</dbReference>
<dbReference type="PROSITE" id="PS50020">
    <property type="entry name" value="WW_DOMAIN_2"/>
    <property type="match status" value="2"/>
</dbReference>